<gene>
    <name type="primary">prfB</name>
    <name type="ordered locus">lin2653</name>
</gene>
<reference key="1">
    <citation type="journal article" date="2001" name="Science">
        <title>Comparative genomics of Listeria species.</title>
        <authorList>
            <person name="Glaser P."/>
            <person name="Frangeul L."/>
            <person name="Buchrieser C."/>
            <person name="Rusniok C."/>
            <person name="Amend A."/>
            <person name="Baquero F."/>
            <person name="Berche P."/>
            <person name="Bloecker H."/>
            <person name="Brandt P."/>
            <person name="Chakraborty T."/>
            <person name="Charbit A."/>
            <person name="Chetouani F."/>
            <person name="Couve E."/>
            <person name="de Daruvar A."/>
            <person name="Dehoux P."/>
            <person name="Domann E."/>
            <person name="Dominguez-Bernal G."/>
            <person name="Duchaud E."/>
            <person name="Durant L."/>
            <person name="Dussurget O."/>
            <person name="Entian K.-D."/>
            <person name="Fsihi H."/>
            <person name="Garcia-del Portillo F."/>
            <person name="Garrido P."/>
            <person name="Gautier L."/>
            <person name="Goebel W."/>
            <person name="Gomez-Lopez N."/>
            <person name="Hain T."/>
            <person name="Hauf J."/>
            <person name="Jackson D."/>
            <person name="Jones L.-M."/>
            <person name="Kaerst U."/>
            <person name="Kreft J."/>
            <person name="Kuhn M."/>
            <person name="Kunst F."/>
            <person name="Kurapkat G."/>
            <person name="Madueno E."/>
            <person name="Maitournam A."/>
            <person name="Mata Vicente J."/>
            <person name="Ng E."/>
            <person name="Nedjari H."/>
            <person name="Nordsiek G."/>
            <person name="Novella S."/>
            <person name="de Pablos B."/>
            <person name="Perez-Diaz J.-C."/>
            <person name="Purcell R."/>
            <person name="Remmel B."/>
            <person name="Rose M."/>
            <person name="Schlueter T."/>
            <person name="Simoes N."/>
            <person name="Tierrez A."/>
            <person name="Vazquez-Boland J.-A."/>
            <person name="Voss H."/>
            <person name="Wehland J."/>
            <person name="Cossart P."/>
        </authorList>
    </citation>
    <scope>NUCLEOTIDE SEQUENCE [LARGE SCALE GENOMIC DNA]</scope>
    <source>
        <strain>ATCC BAA-680 / CLIP 11262</strain>
    </source>
</reference>
<keyword id="KW-0963">Cytoplasm</keyword>
<keyword id="KW-0488">Methylation</keyword>
<keyword id="KW-0648">Protein biosynthesis</keyword>
<keyword id="KW-0688">Ribosomal frameshifting</keyword>
<sequence length="366" mass="42036">MELAEIRNELEKTAQQIKDFRGSLDLDSMEVRIAELEDQMLDPNFWNDQQAAQKVINESNGYKETYQAFHALEEEQESMEISLELLKEEADEDLQAELEKDIKAYVATISEFELKLMLSDPYDKNNAILELHPGAGGTESQDWGSMLLRMYQRWSEKKGFKVEMLDYQAGDEAGIKSVTLLIKGHNAYGYLKAEKGVHRLVRISPFDSSGRRHTSFVSVDVMPELDDEIEIEVRTEDLKIDTYRATGAGGQHINTTDSAVRMTHIPSGIVVTCQSERSQLKNREQAMKMLKTKLYQKEQEEKERELAEIRGEQKEIGWGSQIRSYVFHPYSMVKDHRTNYETGNIQAVMDGDLDDFINAYLRSRIG</sequence>
<name>RF2_LISIN</name>
<dbReference type="EMBL" id="AL596173">
    <property type="protein sequence ID" value="CAC97879.1"/>
    <property type="status" value="ALT_INIT"/>
    <property type="molecule type" value="Genomic_DNA"/>
</dbReference>
<dbReference type="PIR" id="AG1763">
    <property type="entry name" value="AG1763"/>
</dbReference>
<dbReference type="RefSeq" id="WP_147732828.1">
    <property type="nucleotide sequence ID" value="NC_003212.1"/>
</dbReference>
<dbReference type="SMR" id="Q927Y4"/>
<dbReference type="STRING" id="272626.gene:17567033"/>
<dbReference type="GeneID" id="93235916"/>
<dbReference type="KEGG" id="lin:prfB"/>
<dbReference type="eggNOG" id="COG1186">
    <property type="taxonomic scope" value="Bacteria"/>
</dbReference>
<dbReference type="HOGENOM" id="CLU_036856_6_0_9"/>
<dbReference type="OrthoDB" id="9806673at2"/>
<dbReference type="Proteomes" id="UP000002513">
    <property type="component" value="Chromosome"/>
</dbReference>
<dbReference type="GO" id="GO:0005737">
    <property type="term" value="C:cytoplasm"/>
    <property type="evidence" value="ECO:0007669"/>
    <property type="project" value="UniProtKB-SubCell"/>
</dbReference>
<dbReference type="GO" id="GO:0016149">
    <property type="term" value="F:translation release factor activity, codon specific"/>
    <property type="evidence" value="ECO:0007669"/>
    <property type="project" value="UniProtKB-UniRule"/>
</dbReference>
<dbReference type="GO" id="GO:0075523">
    <property type="term" value="P:viral translational frameshifting"/>
    <property type="evidence" value="ECO:0007669"/>
    <property type="project" value="UniProtKB-KW"/>
</dbReference>
<dbReference type="FunFam" id="3.30.160.20:FF:000010">
    <property type="entry name" value="Peptide chain release factor 2"/>
    <property type="match status" value="1"/>
</dbReference>
<dbReference type="Gene3D" id="3.30.160.20">
    <property type="match status" value="1"/>
</dbReference>
<dbReference type="Gene3D" id="3.30.70.1660">
    <property type="match status" value="1"/>
</dbReference>
<dbReference type="Gene3D" id="1.20.58.410">
    <property type="entry name" value="Release factor"/>
    <property type="match status" value="1"/>
</dbReference>
<dbReference type="HAMAP" id="MF_00094">
    <property type="entry name" value="Rel_fac_2"/>
    <property type="match status" value="1"/>
</dbReference>
<dbReference type="InterPro" id="IPR005139">
    <property type="entry name" value="PCRF"/>
</dbReference>
<dbReference type="InterPro" id="IPR000352">
    <property type="entry name" value="Pep_chain_release_fac_I"/>
</dbReference>
<dbReference type="InterPro" id="IPR045853">
    <property type="entry name" value="Pep_chain_release_fac_I_sf"/>
</dbReference>
<dbReference type="InterPro" id="IPR004374">
    <property type="entry name" value="PrfB"/>
</dbReference>
<dbReference type="NCBIfam" id="TIGR00020">
    <property type="entry name" value="prfB"/>
    <property type="match status" value="1"/>
</dbReference>
<dbReference type="PANTHER" id="PTHR43116:SF3">
    <property type="entry name" value="CLASS I PEPTIDE CHAIN RELEASE FACTOR"/>
    <property type="match status" value="1"/>
</dbReference>
<dbReference type="PANTHER" id="PTHR43116">
    <property type="entry name" value="PEPTIDE CHAIN RELEASE FACTOR 2"/>
    <property type="match status" value="1"/>
</dbReference>
<dbReference type="Pfam" id="PF03462">
    <property type="entry name" value="PCRF"/>
    <property type="match status" value="1"/>
</dbReference>
<dbReference type="Pfam" id="PF00472">
    <property type="entry name" value="RF-1"/>
    <property type="match status" value="1"/>
</dbReference>
<dbReference type="SMART" id="SM00937">
    <property type="entry name" value="PCRF"/>
    <property type="match status" value="1"/>
</dbReference>
<dbReference type="SUPFAM" id="SSF75620">
    <property type="entry name" value="Release factor"/>
    <property type="match status" value="1"/>
</dbReference>
<dbReference type="PROSITE" id="PS00745">
    <property type="entry name" value="RF_PROK_I"/>
    <property type="match status" value="1"/>
</dbReference>
<feature type="chain" id="PRO_0000166827" description="Peptide chain release factor 2">
    <location>
        <begin position="1"/>
        <end position="366"/>
    </location>
</feature>
<feature type="modified residue" description="N5-methylglutamine" evidence="1">
    <location>
        <position position="251"/>
    </location>
</feature>
<accession>Q927Y4</accession>
<protein>
    <recommendedName>
        <fullName>Peptide chain release factor 2</fullName>
        <shortName>RF-2</shortName>
    </recommendedName>
</protein>
<proteinExistence type="inferred from homology"/>
<comment type="function">
    <text evidence="1">Peptide chain release factor 2 directs the termination of translation in response to the peptide chain termination codons UGA and UAA.</text>
</comment>
<comment type="subcellular location">
    <subcellularLocation>
        <location evidence="1">Cytoplasm</location>
    </subcellularLocation>
</comment>
<comment type="PTM">
    <text evidence="1">Methylated by PrmC. Methylation increases the termination efficiency of RF2 (By similarity).</text>
</comment>
<comment type="miscellaneous">
    <text evidence="1">The gene for this protein contains a UGA in-frame termination codon after Leu-24; a naturally occurring frameshift enables complete translation of RF-2. This provides a mechanism for the protein to regulate its own production (By similarity).</text>
</comment>
<comment type="similarity">
    <text evidence="2">Belongs to the prokaryotic/mitochondrial release factor family.</text>
</comment>
<comment type="sequence caution" evidence="2">
    <conflict type="erroneous initiation">
        <sequence resource="EMBL-CDS" id="CAC97879"/>
    </conflict>
</comment>
<evidence type="ECO:0000250" key="1"/>
<evidence type="ECO:0000305" key="2"/>
<organism>
    <name type="scientific">Listeria innocua serovar 6a (strain ATCC BAA-680 / CLIP 11262)</name>
    <dbReference type="NCBI Taxonomy" id="272626"/>
    <lineage>
        <taxon>Bacteria</taxon>
        <taxon>Bacillati</taxon>
        <taxon>Bacillota</taxon>
        <taxon>Bacilli</taxon>
        <taxon>Bacillales</taxon>
        <taxon>Listeriaceae</taxon>
        <taxon>Listeria</taxon>
    </lineage>
</organism>